<evidence type="ECO:0000255" key="1">
    <source>
        <dbReference type="HAMAP-Rule" id="MF_00215"/>
    </source>
</evidence>
<name>COAA_MYCS2</name>
<feature type="chain" id="PRO_1000043228" description="Pantothenate kinase">
    <location>
        <begin position="1"/>
        <end position="312"/>
    </location>
</feature>
<feature type="binding site" evidence="1">
    <location>
        <begin position="97"/>
        <end position="104"/>
    </location>
    <ligand>
        <name>ATP</name>
        <dbReference type="ChEBI" id="CHEBI:30616"/>
    </ligand>
</feature>
<proteinExistence type="inferred from homology"/>
<comment type="catalytic activity">
    <reaction evidence="1">
        <text>(R)-pantothenate + ATP = (R)-4'-phosphopantothenate + ADP + H(+)</text>
        <dbReference type="Rhea" id="RHEA:16373"/>
        <dbReference type="ChEBI" id="CHEBI:10986"/>
        <dbReference type="ChEBI" id="CHEBI:15378"/>
        <dbReference type="ChEBI" id="CHEBI:29032"/>
        <dbReference type="ChEBI" id="CHEBI:30616"/>
        <dbReference type="ChEBI" id="CHEBI:456216"/>
        <dbReference type="EC" id="2.7.1.33"/>
    </reaction>
</comment>
<comment type="pathway">
    <text evidence="1">Cofactor biosynthesis; coenzyme A biosynthesis; CoA from (R)-pantothenate: step 1/5.</text>
</comment>
<comment type="subcellular location">
    <subcellularLocation>
        <location evidence="1">Cytoplasm</location>
    </subcellularLocation>
</comment>
<comment type="similarity">
    <text evidence="1">Belongs to the prokaryotic pantothenate kinase family.</text>
</comment>
<reference key="1">
    <citation type="submission" date="2006-10" db="EMBL/GenBank/DDBJ databases">
        <authorList>
            <person name="Fleischmann R.D."/>
            <person name="Dodson R.J."/>
            <person name="Haft D.H."/>
            <person name="Merkel J.S."/>
            <person name="Nelson W.C."/>
            <person name="Fraser C.M."/>
        </authorList>
    </citation>
    <scope>NUCLEOTIDE SEQUENCE [LARGE SCALE GENOMIC DNA]</scope>
    <source>
        <strain>ATCC 700084 / mc(2)155</strain>
    </source>
</reference>
<reference key="2">
    <citation type="journal article" date="2007" name="Genome Biol.">
        <title>Interrupted coding sequences in Mycobacterium smegmatis: authentic mutations or sequencing errors?</title>
        <authorList>
            <person name="Deshayes C."/>
            <person name="Perrodou E."/>
            <person name="Gallien S."/>
            <person name="Euphrasie D."/>
            <person name="Schaeffer C."/>
            <person name="Van-Dorsselaer A."/>
            <person name="Poch O."/>
            <person name="Lecompte O."/>
            <person name="Reyrat J.-M."/>
        </authorList>
    </citation>
    <scope>NUCLEOTIDE SEQUENCE [LARGE SCALE GENOMIC DNA]</scope>
    <source>
        <strain>ATCC 700084 / mc(2)155</strain>
    </source>
</reference>
<reference key="3">
    <citation type="journal article" date="2009" name="Genome Res.">
        <title>Ortho-proteogenomics: multiple proteomes investigation through orthology and a new MS-based protocol.</title>
        <authorList>
            <person name="Gallien S."/>
            <person name="Perrodou E."/>
            <person name="Carapito C."/>
            <person name="Deshayes C."/>
            <person name="Reyrat J.-M."/>
            <person name="Van Dorsselaer A."/>
            <person name="Poch O."/>
            <person name="Schaeffer C."/>
            <person name="Lecompte O."/>
        </authorList>
    </citation>
    <scope>NUCLEOTIDE SEQUENCE [LARGE SCALE GENOMIC DNA]</scope>
    <source>
        <strain>ATCC 700084 / mc(2)155</strain>
    </source>
</reference>
<keyword id="KW-0067">ATP-binding</keyword>
<keyword id="KW-0173">Coenzyme A biosynthesis</keyword>
<keyword id="KW-0963">Cytoplasm</keyword>
<keyword id="KW-0418">Kinase</keyword>
<keyword id="KW-0547">Nucleotide-binding</keyword>
<keyword id="KW-1185">Reference proteome</keyword>
<keyword id="KW-0808">Transferase</keyword>
<accession>A0R2V9</accession>
<accession>I7G756</accession>
<gene>
    <name evidence="1" type="primary">coaA</name>
    <name type="ordered locus">MSMEG_5252</name>
    <name type="ordered locus">MSMEI_5113</name>
</gene>
<dbReference type="EC" id="2.7.1.33" evidence="1"/>
<dbReference type="EMBL" id="CP000480">
    <property type="protein sequence ID" value="ABK71855.1"/>
    <property type="molecule type" value="Genomic_DNA"/>
</dbReference>
<dbReference type="EMBL" id="CP001663">
    <property type="protein sequence ID" value="AFP41557.1"/>
    <property type="molecule type" value="Genomic_DNA"/>
</dbReference>
<dbReference type="RefSeq" id="WP_011730417.1">
    <property type="nucleotide sequence ID" value="NZ_SIJM01000014.1"/>
</dbReference>
<dbReference type="RefSeq" id="YP_889497.1">
    <property type="nucleotide sequence ID" value="NC_008596.1"/>
</dbReference>
<dbReference type="SMR" id="A0R2V9"/>
<dbReference type="STRING" id="246196.MSMEG_5252"/>
<dbReference type="PaxDb" id="246196-MSMEI_5113"/>
<dbReference type="GeneID" id="93459910"/>
<dbReference type="KEGG" id="msb:LJ00_25970"/>
<dbReference type="KEGG" id="msg:MSMEI_5113"/>
<dbReference type="KEGG" id="msm:MSMEG_5252"/>
<dbReference type="PATRIC" id="fig|246196.19.peg.5122"/>
<dbReference type="eggNOG" id="COG0572">
    <property type="taxonomic scope" value="Bacteria"/>
</dbReference>
<dbReference type="OrthoDB" id="1550976at2"/>
<dbReference type="UniPathway" id="UPA00241">
    <property type="reaction ID" value="UER00352"/>
</dbReference>
<dbReference type="Proteomes" id="UP000000757">
    <property type="component" value="Chromosome"/>
</dbReference>
<dbReference type="Proteomes" id="UP000006158">
    <property type="component" value="Chromosome"/>
</dbReference>
<dbReference type="GO" id="GO:0005737">
    <property type="term" value="C:cytoplasm"/>
    <property type="evidence" value="ECO:0007669"/>
    <property type="project" value="UniProtKB-SubCell"/>
</dbReference>
<dbReference type="GO" id="GO:0005524">
    <property type="term" value="F:ATP binding"/>
    <property type="evidence" value="ECO:0007669"/>
    <property type="project" value="UniProtKB-UniRule"/>
</dbReference>
<dbReference type="GO" id="GO:0004594">
    <property type="term" value="F:pantothenate kinase activity"/>
    <property type="evidence" value="ECO:0007669"/>
    <property type="project" value="UniProtKB-UniRule"/>
</dbReference>
<dbReference type="GO" id="GO:0015937">
    <property type="term" value="P:coenzyme A biosynthetic process"/>
    <property type="evidence" value="ECO:0007669"/>
    <property type="project" value="UniProtKB-UniRule"/>
</dbReference>
<dbReference type="CDD" id="cd02025">
    <property type="entry name" value="PanK"/>
    <property type="match status" value="1"/>
</dbReference>
<dbReference type="FunFam" id="3.40.50.300:FF:000242">
    <property type="entry name" value="Pantothenate kinase"/>
    <property type="match status" value="1"/>
</dbReference>
<dbReference type="Gene3D" id="3.40.50.300">
    <property type="entry name" value="P-loop containing nucleotide triphosphate hydrolases"/>
    <property type="match status" value="1"/>
</dbReference>
<dbReference type="HAMAP" id="MF_00215">
    <property type="entry name" value="Pantothen_kinase_1"/>
    <property type="match status" value="1"/>
</dbReference>
<dbReference type="InterPro" id="IPR027417">
    <property type="entry name" value="P-loop_NTPase"/>
</dbReference>
<dbReference type="InterPro" id="IPR004566">
    <property type="entry name" value="PanK"/>
</dbReference>
<dbReference type="InterPro" id="IPR006083">
    <property type="entry name" value="PRK/URK"/>
</dbReference>
<dbReference type="NCBIfam" id="TIGR00554">
    <property type="entry name" value="panK_bact"/>
    <property type="match status" value="1"/>
</dbReference>
<dbReference type="PANTHER" id="PTHR10285">
    <property type="entry name" value="URIDINE KINASE"/>
    <property type="match status" value="1"/>
</dbReference>
<dbReference type="Pfam" id="PF00485">
    <property type="entry name" value="PRK"/>
    <property type="match status" value="1"/>
</dbReference>
<dbReference type="PIRSF" id="PIRSF000545">
    <property type="entry name" value="Pantothenate_kin"/>
    <property type="match status" value="1"/>
</dbReference>
<dbReference type="SUPFAM" id="SSF52540">
    <property type="entry name" value="P-loop containing nucleoside triphosphate hydrolases"/>
    <property type="match status" value="1"/>
</dbReference>
<organism>
    <name type="scientific">Mycolicibacterium smegmatis (strain ATCC 700084 / mc(2)155)</name>
    <name type="common">Mycobacterium smegmatis</name>
    <dbReference type="NCBI Taxonomy" id="246196"/>
    <lineage>
        <taxon>Bacteria</taxon>
        <taxon>Bacillati</taxon>
        <taxon>Actinomycetota</taxon>
        <taxon>Actinomycetes</taxon>
        <taxon>Mycobacteriales</taxon>
        <taxon>Mycobacteriaceae</taxon>
        <taxon>Mycolicibacterium</taxon>
    </lineage>
</organism>
<protein>
    <recommendedName>
        <fullName evidence="1">Pantothenate kinase</fullName>
        <ecNumber evidence="1">2.7.1.33</ecNumber>
    </recommendedName>
    <alternativeName>
        <fullName evidence="1">Pantothenic acid kinase</fullName>
    </alternativeName>
</protein>
<sequence length="312" mass="35662">MPRPSEPSPYVEFDRSQWRSLRMSTPLKLSEDELVRLRGMGEKLDLLEVEEVYLPLARLIHLQVAARQRLFATTAEFLGEPQQNPDRPVPFIIGVAGSVAVGKSTTARVLQALLARWEHHPRVDLVTTDGFLYPNAELARRNLMHRKGFPESYNRRALMRFVTAVKSGADEAAAPVYSHLLYDIVPGEYQIVRHPDILILEGLNVLQTGPALMVSDLFDFSVYVDARIEDIEQWYISRFLTMRSTAFADPASHFHSYSTLTDEQAVFAARDIWHSINRPNLIENILPTRPRATLVLRKDADHSINRLRLRKL</sequence>